<comment type="function">
    <text evidence="2">Stearoyl-CoA desaturase that utilizes O(2) and electrons from reduced cytochrome b5 to introduce the first double bond into saturated fatty acyl-CoA substrates. Catalyzes the insertion of a cis double bond at the delta-9 position into fatty acyl-CoA substrates including palmitoyl-CoA and stearoyl-CoA (By similarity). Gives rise to a mixture of 16:1 and 18:1 unsaturated fatty acids. Plays an important role in lipid biosynthesis. Plays an important role in regulating the expression of genes that are involved in lipogenesis and in regulating mitochondrial fatty acid oxidation (By similarity). Plays an important role in body energy homeostasis (By similarity). Contributes to the biosynthesis of membrane phospholipids, cholesterol esters and triglycerides (By similarity).</text>
</comment>
<comment type="catalytic activity">
    <reaction evidence="2">
        <text>octadecanoyl-CoA + 2 Fe(II)-[cytochrome b5] + O2 + 2 H(+) = (9Z)-octadecenoyl-CoA + 2 Fe(III)-[cytochrome b5] + 2 H2O</text>
        <dbReference type="Rhea" id="RHEA:19721"/>
        <dbReference type="Rhea" id="RHEA-COMP:10438"/>
        <dbReference type="Rhea" id="RHEA-COMP:10439"/>
        <dbReference type="ChEBI" id="CHEBI:15377"/>
        <dbReference type="ChEBI" id="CHEBI:15378"/>
        <dbReference type="ChEBI" id="CHEBI:15379"/>
        <dbReference type="ChEBI" id="CHEBI:29033"/>
        <dbReference type="ChEBI" id="CHEBI:29034"/>
        <dbReference type="ChEBI" id="CHEBI:57387"/>
        <dbReference type="ChEBI" id="CHEBI:57394"/>
        <dbReference type="EC" id="1.14.19.1"/>
    </reaction>
</comment>
<comment type="catalytic activity">
    <reaction evidence="1">
        <text>hexadecanoyl-CoA + 2 Fe(II)-[cytochrome b5] + O2 + 2 H(+) = (9Z)-hexadecenoyl-CoA + 2 Fe(III)-[cytochrome b5] + 2 H2O</text>
        <dbReference type="Rhea" id="RHEA:36931"/>
        <dbReference type="Rhea" id="RHEA-COMP:10438"/>
        <dbReference type="Rhea" id="RHEA-COMP:10439"/>
        <dbReference type="ChEBI" id="CHEBI:15377"/>
        <dbReference type="ChEBI" id="CHEBI:15378"/>
        <dbReference type="ChEBI" id="CHEBI:15379"/>
        <dbReference type="ChEBI" id="CHEBI:29033"/>
        <dbReference type="ChEBI" id="CHEBI:29034"/>
        <dbReference type="ChEBI" id="CHEBI:57379"/>
        <dbReference type="ChEBI" id="CHEBI:61540"/>
    </reaction>
</comment>
<comment type="cofactor">
    <cofactor evidence="2">
        <name>Fe(2+)</name>
        <dbReference type="ChEBI" id="CHEBI:29033"/>
    </cofactor>
    <text evidence="2">Expected to bind 2 Fe(2+) ions per subunit.</text>
</comment>
<comment type="subcellular location">
    <subcellularLocation>
        <location evidence="2">Endoplasmic reticulum membrane</location>
        <topology evidence="5">Multi-pass membrane protein</topology>
    </subcellularLocation>
</comment>
<comment type="domain">
    <text evidence="1">The histidine box domains are involved in binding the catalytic metal ions.</text>
</comment>
<comment type="similarity">
    <text evidence="5">Belongs to the fatty acid desaturase type 1 family.</text>
</comment>
<feature type="chain" id="PRO_0000185396" description="Stearoyl-CoA desaturase">
    <location>
        <begin position="1"/>
        <end position="354"/>
    </location>
</feature>
<feature type="topological domain" description="Cytoplasmic" evidence="1">
    <location>
        <begin position="1"/>
        <end position="67"/>
    </location>
</feature>
<feature type="transmembrane region" description="Helical" evidence="1">
    <location>
        <begin position="68"/>
        <end position="88"/>
    </location>
</feature>
<feature type="topological domain" description="Lumenal" evidence="1">
    <location>
        <begin position="89"/>
        <end position="92"/>
    </location>
</feature>
<feature type="transmembrane region" description="Helical" evidence="1">
    <location>
        <begin position="93"/>
        <end position="113"/>
    </location>
</feature>
<feature type="topological domain" description="Cytoplasmic" evidence="1">
    <location>
        <begin position="114"/>
        <end position="212"/>
    </location>
</feature>
<feature type="transmembrane region" description="Helical" evidence="1">
    <location>
        <begin position="213"/>
        <end position="232"/>
    </location>
</feature>
<feature type="topological domain" description="Lumenal" evidence="1">
    <location>
        <begin position="233"/>
        <end position="236"/>
    </location>
</feature>
<feature type="transmembrane region" description="Helical" evidence="1">
    <location>
        <begin position="237"/>
        <end position="258"/>
    </location>
</feature>
<feature type="topological domain" description="Cytoplasmic" evidence="1">
    <location>
        <begin position="259"/>
        <end position="354"/>
    </location>
</feature>
<feature type="region of interest" description="Disordered" evidence="3">
    <location>
        <begin position="1"/>
        <end position="28"/>
    </location>
</feature>
<feature type="short sequence motif" description="Histidine box-1" evidence="5">
    <location>
        <begin position="115"/>
        <end position="120"/>
    </location>
</feature>
<feature type="short sequence motif" description="Histidine box-2" evidence="5">
    <location>
        <begin position="152"/>
        <end position="156"/>
    </location>
</feature>
<feature type="short sequence motif" description="Histidine box-3" evidence="5">
    <location>
        <begin position="293"/>
        <end position="297"/>
    </location>
</feature>
<feature type="compositionally biased region" description="Low complexity" evidence="3">
    <location>
        <begin position="8"/>
        <end position="28"/>
    </location>
</feature>
<feature type="binding site" evidence="1">
    <location>
        <position position="70"/>
    </location>
    <ligand>
        <name>substrate</name>
    </ligand>
</feature>
<feature type="binding site" evidence="2">
    <location>
        <position position="115"/>
    </location>
    <ligand>
        <name>Fe cation</name>
        <dbReference type="ChEBI" id="CHEBI:24875"/>
        <label>1</label>
    </ligand>
</feature>
<feature type="binding site" evidence="2">
    <location>
        <position position="120"/>
    </location>
    <ligand>
        <name>Fe cation</name>
        <dbReference type="ChEBI" id="CHEBI:24875"/>
        <label>1</label>
    </ligand>
</feature>
<feature type="binding site" evidence="1">
    <location>
        <position position="143"/>
    </location>
    <ligand>
        <name>substrate</name>
    </ligand>
</feature>
<feature type="binding site" evidence="1">
    <location>
        <position position="150"/>
    </location>
    <ligand>
        <name>substrate</name>
    </ligand>
</feature>
<feature type="binding site" evidence="1">
    <location>
        <position position="151"/>
    </location>
    <ligand>
        <name>substrate</name>
    </ligand>
</feature>
<feature type="binding site" evidence="2">
    <location>
        <position position="152"/>
    </location>
    <ligand>
        <name>Fe cation</name>
        <dbReference type="ChEBI" id="CHEBI:24875"/>
        <label>1</label>
    </ligand>
</feature>
<feature type="binding site" evidence="2">
    <location>
        <position position="155"/>
    </location>
    <ligand>
        <name>Fe cation</name>
        <dbReference type="ChEBI" id="CHEBI:24875"/>
        <label>2</label>
    </ligand>
</feature>
<feature type="binding site" evidence="2">
    <location>
        <position position="156"/>
    </location>
    <ligand>
        <name>Fe cation</name>
        <dbReference type="ChEBI" id="CHEBI:24875"/>
        <label>1</label>
    </ligand>
</feature>
<feature type="binding site" evidence="1">
    <location>
        <position position="183"/>
    </location>
    <ligand>
        <name>substrate</name>
    </ligand>
</feature>
<feature type="binding site" evidence="1">
    <location>
        <position position="184"/>
    </location>
    <ligand>
        <name>substrate</name>
    </ligand>
</feature>
<feature type="binding site" evidence="1">
    <location>
        <position position="257"/>
    </location>
    <ligand>
        <name>substrate</name>
    </ligand>
</feature>
<feature type="binding site" evidence="2">
    <location>
        <position position="264"/>
    </location>
    <ligand>
        <name>Fe cation</name>
        <dbReference type="ChEBI" id="CHEBI:24875"/>
        <label>2</label>
    </ligand>
</feature>
<feature type="binding site" evidence="2">
    <location>
        <position position="293"/>
    </location>
    <ligand>
        <name>Fe cation</name>
        <dbReference type="ChEBI" id="CHEBI:24875"/>
        <label>2</label>
    </ligand>
</feature>
<feature type="binding site" evidence="2">
    <location>
        <position position="296"/>
    </location>
    <ligand>
        <name>Fe cation</name>
        <dbReference type="ChEBI" id="CHEBI:24875"/>
        <label>1</label>
    </ligand>
</feature>
<feature type="binding site" evidence="2">
    <location>
        <position position="297"/>
    </location>
    <ligand>
        <name>Fe cation</name>
        <dbReference type="ChEBI" id="CHEBI:24875"/>
        <label>2</label>
    </ligand>
</feature>
<feature type="modified residue" description="Phosphoserine" evidence="1">
    <location>
        <position position="198"/>
    </location>
</feature>
<keyword id="KW-0256">Endoplasmic reticulum</keyword>
<keyword id="KW-0275">Fatty acid biosynthesis</keyword>
<keyword id="KW-0276">Fatty acid metabolism</keyword>
<keyword id="KW-0408">Iron</keyword>
<keyword id="KW-0444">Lipid biosynthesis</keyword>
<keyword id="KW-0443">Lipid metabolism</keyword>
<keyword id="KW-0472">Membrane</keyword>
<keyword id="KW-0479">Metal-binding</keyword>
<keyword id="KW-0560">Oxidoreductase</keyword>
<keyword id="KW-0597">Phosphoprotein</keyword>
<keyword id="KW-1185">Reference proteome</keyword>
<keyword id="KW-0812">Transmembrane</keyword>
<keyword id="KW-1133">Transmembrane helix</keyword>
<evidence type="ECO:0000250" key="1">
    <source>
        <dbReference type="UniProtKB" id="O00767"/>
    </source>
</evidence>
<evidence type="ECO:0000250" key="2">
    <source>
        <dbReference type="UniProtKB" id="P13516"/>
    </source>
</evidence>
<evidence type="ECO:0000256" key="3">
    <source>
        <dbReference type="SAM" id="MobiDB-lite"/>
    </source>
</evidence>
<evidence type="ECO:0000303" key="4">
    <source>
    </source>
</evidence>
<evidence type="ECO:0000305" key="5"/>
<name>SCD_MESAU</name>
<sequence length="354" mass="40968">MPGHLLQEEMTSSYTTTTTTITEPPSESLQKTVPLYLEEDIRPEMKEDIYDPSYQDEEGPPPKLEYVWRNIILMALLHLGALYGLVLVPSSKVYTLLWAFVYYVISIEGIGAGVHRLWSHRTYKARLPLRIFLIIANTMAFQNDVYEWARDHRAHHKFSETYADPHDSRRGFFFSHVGWLLVRKHPAVKEKGGKLDMSDLKAEKLVMFQRRYYKPAILLMCFILPTFVPWYFWGEAFVNSLCVSTFLRYTLVLNATWLVNSAAHLYGYRPYDKNIDPRENALVSLGCLGEGFHNYHHAFPYDYSASEYRWHINFTTFFIDCMAALGLAYDRKKVSKAAVLARIKRTGDGSCKSG</sequence>
<gene>
    <name type="primary">SCD</name>
    <name evidence="4" type="synonym">FAR-17c</name>
</gene>
<protein>
    <recommendedName>
        <fullName>Stearoyl-CoA desaturase</fullName>
        <ecNumber evidence="2">1.14.19.1</ecNumber>
    </recommendedName>
    <alternativeName>
        <fullName>Acyl-CoA desaturase</fullName>
    </alternativeName>
    <alternativeName>
        <fullName>Delta(9)-desaturase</fullName>
        <shortName>Delta-9 desaturase</shortName>
    </alternativeName>
    <alternativeName>
        <fullName>Fatty acid desaturase</fullName>
    </alternativeName>
</protein>
<proteinExistence type="evidence at transcript level"/>
<reference key="1">
    <citation type="journal article" date="1995" name="J. Dermatol. Sci.">
        <title>Sequence analysis and characterization of FAR-17c, an androgen-dependent gene in the flank organs of hamsters.</title>
        <authorList>
            <person name="Ideta R."/>
            <person name="Seki T."/>
            <person name="Adachi K."/>
        </authorList>
    </citation>
    <scope>NUCLEOTIDE SEQUENCE [MRNA]</scope>
</reference>
<organism>
    <name type="scientific">Mesocricetus auratus</name>
    <name type="common">Golden hamster</name>
    <dbReference type="NCBI Taxonomy" id="10036"/>
    <lineage>
        <taxon>Eukaryota</taxon>
        <taxon>Metazoa</taxon>
        <taxon>Chordata</taxon>
        <taxon>Craniata</taxon>
        <taxon>Vertebrata</taxon>
        <taxon>Euteleostomi</taxon>
        <taxon>Mammalia</taxon>
        <taxon>Eutheria</taxon>
        <taxon>Euarchontoglires</taxon>
        <taxon>Glires</taxon>
        <taxon>Rodentia</taxon>
        <taxon>Myomorpha</taxon>
        <taxon>Muroidea</taxon>
        <taxon>Cricetidae</taxon>
        <taxon>Cricetinae</taxon>
        <taxon>Mesocricetus</taxon>
    </lineage>
</organism>
<accession>Q64420</accession>
<dbReference type="EC" id="1.14.19.1" evidence="2"/>
<dbReference type="EMBL" id="L26956">
    <property type="protein sequence ID" value="AAC42058.1"/>
    <property type="molecule type" value="mRNA"/>
</dbReference>
<dbReference type="SMR" id="Q64420"/>
<dbReference type="STRING" id="10036.ENSMAUP00000020878"/>
<dbReference type="eggNOG" id="KOG1600">
    <property type="taxonomic scope" value="Eukaryota"/>
</dbReference>
<dbReference type="OrthoDB" id="10260134at2759"/>
<dbReference type="BRENDA" id="1.14.19.1">
    <property type="organism ID" value="3239"/>
</dbReference>
<dbReference type="Proteomes" id="UP000189706">
    <property type="component" value="Unplaced"/>
</dbReference>
<dbReference type="GO" id="GO:0005789">
    <property type="term" value="C:endoplasmic reticulum membrane"/>
    <property type="evidence" value="ECO:0000250"/>
    <property type="project" value="UniProtKB"/>
</dbReference>
<dbReference type="GO" id="GO:0016020">
    <property type="term" value="C:membrane"/>
    <property type="evidence" value="ECO:0000250"/>
    <property type="project" value="UniProtKB"/>
</dbReference>
<dbReference type="GO" id="GO:0005506">
    <property type="term" value="F:iron ion binding"/>
    <property type="evidence" value="ECO:0000250"/>
    <property type="project" value="UniProtKB"/>
</dbReference>
<dbReference type="GO" id="GO:0016491">
    <property type="term" value="F:oxidoreductase activity"/>
    <property type="evidence" value="ECO:0000250"/>
    <property type="project" value="UniProtKB"/>
</dbReference>
<dbReference type="GO" id="GO:0032896">
    <property type="term" value="F:palmitoyl-CoA 9-desaturase activity"/>
    <property type="evidence" value="ECO:0007669"/>
    <property type="project" value="TreeGrafter"/>
</dbReference>
<dbReference type="GO" id="GO:0004768">
    <property type="term" value="F:stearoyl-CoA 9-desaturase activity"/>
    <property type="evidence" value="ECO:0000250"/>
    <property type="project" value="UniProtKB"/>
</dbReference>
<dbReference type="GO" id="GO:1903966">
    <property type="term" value="P:monounsaturated fatty acid biosynthetic process"/>
    <property type="evidence" value="ECO:0007669"/>
    <property type="project" value="TreeGrafter"/>
</dbReference>
<dbReference type="GO" id="GO:0070542">
    <property type="term" value="P:response to fatty acid"/>
    <property type="evidence" value="ECO:0007669"/>
    <property type="project" value="TreeGrafter"/>
</dbReference>
<dbReference type="GO" id="GO:0006636">
    <property type="term" value="P:unsaturated fatty acid biosynthetic process"/>
    <property type="evidence" value="ECO:0000250"/>
    <property type="project" value="UniProtKB"/>
</dbReference>
<dbReference type="CDD" id="cd03505">
    <property type="entry name" value="Delta9-FADS-like"/>
    <property type="match status" value="1"/>
</dbReference>
<dbReference type="InterPro" id="IPR015876">
    <property type="entry name" value="Acyl-CoA_DS"/>
</dbReference>
<dbReference type="InterPro" id="IPR005804">
    <property type="entry name" value="FA_desaturase_dom"/>
</dbReference>
<dbReference type="InterPro" id="IPR001522">
    <property type="entry name" value="FADS-1_CS"/>
</dbReference>
<dbReference type="PANTHER" id="PTHR11351">
    <property type="entry name" value="ACYL-COA DESATURASE"/>
    <property type="match status" value="1"/>
</dbReference>
<dbReference type="PANTHER" id="PTHR11351:SF39">
    <property type="entry name" value="ACYL-COA DESATURASE 3"/>
    <property type="match status" value="1"/>
</dbReference>
<dbReference type="Pfam" id="PF00487">
    <property type="entry name" value="FA_desaturase"/>
    <property type="match status" value="1"/>
</dbReference>
<dbReference type="PRINTS" id="PR00075">
    <property type="entry name" value="FACDDSATRASE"/>
</dbReference>
<dbReference type="PROSITE" id="PS00476">
    <property type="entry name" value="FATTY_ACID_DESATUR_1"/>
    <property type="match status" value="1"/>
</dbReference>